<accession>B8I0Q8</accession>
<evidence type="ECO:0000255" key="1">
    <source>
        <dbReference type="HAMAP-Rule" id="MF_00260"/>
    </source>
</evidence>
<organism>
    <name type="scientific">Ruminiclostridium cellulolyticum (strain ATCC 35319 / DSM 5812 / JCM 6584 / H10)</name>
    <name type="common">Clostridium cellulolyticum</name>
    <dbReference type="NCBI Taxonomy" id="394503"/>
    <lineage>
        <taxon>Bacteria</taxon>
        <taxon>Bacillati</taxon>
        <taxon>Bacillota</taxon>
        <taxon>Clostridia</taxon>
        <taxon>Eubacteriales</taxon>
        <taxon>Oscillospiraceae</taxon>
        <taxon>Ruminiclostridium</taxon>
    </lineage>
</organism>
<sequence>MKKIRIGSRDSKLAIIQSEMVMAAIREFDPDIELELITMKTTGDKILDKTLDKIGGKGLFVKELDYALYNNEVDITVHSYKDMPLEDNPKLPVVALSKREDPRDAFVLPQGEIAENNEPIGSSSQRRQLQLKALFPNRKTAPIRGNVQTRLKKLDSGEFSAIVLAAAGIKRLGLESRISRYFSVDEILPAASQGIIAVQGRAGENFDFLKLFHSEESLCISQAERTFVREMNGGCSTPIAAYATIVESEIILKGLYHNEATGESKKECVSGSRQNPVELGYELVKKMESCRRI</sequence>
<keyword id="KW-0627">Porphyrin biosynthesis</keyword>
<keyword id="KW-1185">Reference proteome</keyword>
<keyword id="KW-0808">Transferase</keyword>
<feature type="chain" id="PRO_1000125665" description="Porphobilinogen deaminase">
    <location>
        <begin position="1"/>
        <end position="293"/>
    </location>
</feature>
<feature type="modified residue" description="S-(dipyrrolylmethanemethyl)cysteine" evidence="1">
    <location>
        <position position="235"/>
    </location>
</feature>
<reference key="1">
    <citation type="submission" date="2009-01" db="EMBL/GenBank/DDBJ databases">
        <title>Complete sequence of Clostridium cellulolyticum H10.</title>
        <authorList>
            <consortium name="US DOE Joint Genome Institute"/>
            <person name="Lucas S."/>
            <person name="Copeland A."/>
            <person name="Lapidus A."/>
            <person name="Glavina del Rio T."/>
            <person name="Dalin E."/>
            <person name="Tice H."/>
            <person name="Bruce D."/>
            <person name="Goodwin L."/>
            <person name="Pitluck S."/>
            <person name="Chertkov O."/>
            <person name="Saunders E."/>
            <person name="Brettin T."/>
            <person name="Detter J.C."/>
            <person name="Han C."/>
            <person name="Larimer F."/>
            <person name="Land M."/>
            <person name="Hauser L."/>
            <person name="Kyrpides N."/>
            <person name="Ivanova N."/>
            <person name="Zhou J."/>
            <person name="Richardson P."/>
        </authorList>
    </citation>
    <scope>NUCLEOTIDE SEQUENCE [LARGE SCALE GENOMIC DNA]</scope>
    <source>
        <strain>ATCC 35319 / DSM 5812 / JCM 6584 / H10</strain>
    </source>
</reference>
<dbReference type="EC" id="2.5.1.61" evidence="1"/>
<dbReference type="EMBL" id="CP001348">
    <property type="protein sequence ID" value="ACL75633.1"/>
    <property type="molecule type" value="Genomic_DNA"/>
</dbReference>
<dbReference type="RefSeq" id="WP_015924782.1">
    <property type="nucleotide sequence ID" value="NC_011898.1"/>
</dbReference>
<dbReference type="SMR" id="B8I0Q8"/>
<dbReference type="STRING" id="394503.Ccel_1277"/>
<dbReference type="KEGG" id="cce:Ccel_1277"/>
<dbReference type="eggNOG" id="COG0181">
    <property type="taxonomic scope" value="Bacteria"/>
</dbReference>
<dbReference type="HOGENOM" id="CLU_019704_1_0_9"/>
<dbReference type="OrthoDB" id="9810298at2"/>
<dbReference type="UniPathway" id="UPA00251">
    <property type="reaction ID" value="UER00319"/>
</dbReference>
<dbReference type="Proteomes" id="UP000001349">
    <property type="component" value="Chromosome"/>
</dbReference>
<dbReference type="GO" id="GO:0005737">
    <property type="term" value="C:cytoplasm"/>
    <property type="evidence" value="ECO:0007669"/>
    <property type="project" value="TreeGrafter"/>
</dbReference>
<dbReference type="GO" id="GO:0004418">
    <property type="term" value="F:hydroxymethylbilane synthase activity"/>
    <property type="evidence" value="ECO:0007669"/>
    <property type="project" value="UniProtKB-UniRule"/>
</dbReference>
<dbReference type="GO" id="GO:0006782">
    <property type="term" value="P:protoporphyrinogen IX biosynthetic process"/>
    <property type="evidence" value="ECO:0007669"/>
    <property type="project" value="UniProtKB-UniRule"/>
</dbReference>
<dbReference type="CDD" id="cd00494">
    <property type="entry name" value="PBP2_HMBS"/>
    <property type="match status" value="1"/>
</dbReference>
<dbReference type="FunFam" id="3.40.190.10:FF:000004">
    <property type="entry name" value="Porphobilinogen deaminase"/>
    <property type="match status" value="1"/>
</dbReference>
<dbReference type="FunFam" id="3.40.190.10:FF:000005">
    <property type="entry name" value="Porphobilinogen deaminase"/>
    <property type="match status" value="1"/>
</dbReference>
<dbReference type="Gene3D" id="3.40.190.10">
    <property type="entry name" value="Periplasmic binding protein-like II"/>
    <property type="match status" value="2"/>
</dbReference>
<dbReference type="Gene3D" id="3.30.160.40">
    <property type="entry name" value="Porphobilinogen deaminase, C-terminal domain"/>
    <property type="match status" value="1"/>
</dbReference>
<dbReference type="HAMAP" id="MF_00260">
    <property type="entry name" value="Porphobil_deam"/>
    <property type="match status" value="1"/>
</dbReference>
<dbReference type="InterPro" id="IPR000860">
    <property type="entry name" value="HemC"/>
</dbReference>
<dbReference type="InterPro" id="IPR022419">
    <property type="entry name" value="Porphobilin_deaminase_cofac_BS"/>
</dbReference>
<dbReference type="InterPro" id="IPR022417">
    <property type="entry name" value="Porphobilin_deaminase_N"/>
</dbReference>
<dbReference type="InterPro" id="IPR022418">
    <property type="entry name" value="Porphobilinogen_deaminase_C"/>
</dbReference>
<dbReference type="InterPro" id="IPR036803">
    <property type="entry name" value="Porphobilinogen_deaminase_C_sf"/>
</dbReference>
<dbReference type="NCBIfam" id="TIGR00212">
    <property type="entry name" value="hemC"/>
    <property type="match status" value="1"/>
</dbReference>
<dbReference type="PANTHER" id="PTHR11557">
    <property type="entry name" value="PORPHOBILINOGEN DEAMINASE"/>
    <property type="match status" value="1"/>
</dbReference>
<dbReference type="PANTHER" id="PTHR11557:SF0">
    <property type="entry name" value="PORPHOBILINOGEN DEAMINASE"/>
    <property type="match status" value="1"/>
</dbReference>
<dbReference type="Pfam" id="PF01379">
    <property type="entry name" value="Porphobil_deam"/>
    <property type="match status" value="1"/>
</dbReference>
<dbReference type="Pfam" id="PF03900">
    <property type="entry name" value="Porphobil_deamC"/>
    <property type="match status" value="1"/>
</dbReference>
<dbReference type="PIRSF" id="PIRSF001438">
    <property type="entry name" value="4pyrrol_synth_OHMeBilane_synth"/>
    <property type="match status" value="1"/>
</dbReference>
<dbReference type="PRINTS" id="PR00151">
    <property type="entry name" value="PORPHBDMNASE"/>
</dbReference>
<dbReference type="SUPFAM" id="SSF53850">
    <property type="entry name" value="Periplasmic binding protein-like II"/>
    <property type="match status" value="1"/>
</dbReference>
<dbReference type="SUPFAM" id="SSF54782">
    <property type="entry name" value="Porphobilinogen deaminase (hydroxymethylbilane synthase), C-terminal domain"/>
    <property type="match status" value="1"/>
</dbReference>
<dbReference type="PROSITE" id="PS00533">
    <property type="entry name" value="PORPHOBILINOGEN_DEAM"/>
    <property type="match status" value="1"/>
</dbReference>
<protein>
    <recommendedName>
        <fullName evidence="1">Porphobilinogen deaminase</fullName>
        <shortName evidence="1">PBG</shortName>
        <ecNumber evidence="1">2.5.1.61</ecNumber>
    </recommendedName>
    <alternativeName>
        <fullName evidence="1">Hydroxymethylbilane synthase</fullName>
        <shortName evidence="1">HMBS</shortName>
    </alternativeName>
    <alternativeName>
        <fullName evidence="1">Pre-uroporphyrinogen synthase</fullName>
    </alternativeName>
</protein>
<name>HEM3_RUMCH</name>
<proteinExistence type="inferred from homology"/>
<gene>
    <name evidence="1" type="primary">hemC</name>
    <name type="ordered locus">Ccel_1277</name>
</gene>
<comment type="function">
    <text evidence="1">Tetrapolymerization of the monopyrrole PBG into the hydroxymethylbilane pre-uroporphyrinogen in several discrete steps.</text>
</comment>
<comment type="catalytic activity">
    <reaction evidence="1">
        <text>4 porphobilinogen + H2O = hydroxymethylbilane + 4 NH4(+)</text>
        <dbReference type="Rhea" id="RHEA:13185"/>
        <dbReference type="ChEBI" id="CHEBI:15377"/>
        <dbReference type="ChEBI" id="CHEBI:28938"/>
        <dbReference type="ChEBI" id="CHEBI:57845"/>
        <dbReference type="ChEBI" id="CHEBI:58126"/>
        <dbReference type="EC" id="2.5.1.61"/>
    </reaction>
</comment>
<comment type="cofactor">
    <cofactor evidence="1">
        <name>dipyrromethane</name>
        <dbReference type="ChEBI" id="CHEBI:60342"/>
    </cofactor>
    <text evidence="1">Binds 1 dipyrromethane group covalently.</text>
</comment>
<comment type="pathway">
    <text evidence="1">Porphyrin-containing compound metabolism; protoporphyrin-IX biosynthesis; coproporphyrinogen-III from 5-aminolevulinate: step 2/4.</text>
</comment>
<comment type="subunit">
    <text evidence="1">Monomer.</text>
</comment>
<comment type="miscellaneous">
    <text evidence="1">The porphobilinogen subunits are added to the dipyrromethane group.</text>
</comment>
<comment type="similarity">
    <text evidence="1">Belongs to the HMBS family.</text>
</comment>